<protein>
    <recommendedName>
        <fullName>Structural polyprotein</fullName>
    </recommendedName>
    <alternativeName>
        <fullName>p130</fullName>
    </alternativeName>
    <component>
        <recommendedName>
            <fullName>Capsid protein</fullName>
            <ecNumber evidence="2">3.4.21.90</ecNumber>
        </recommendedName>
        <alternativeName>
            <fullName>Coat protein</fullName>
            <shortName>C</shortName>
        </alternativeName>
    </component>
    <component>
        <recommendedName>
            <fullName>Precursor of protein E3/E2</fullName>
        </recommendedName>
        <alternativeName>
            <fullName>p62</fullName>
        </alternativeName>
        <alternativeName>
            <fullName>pE2</fullName>
        </alternativeName>
    </component>
    <component>
        <recommendedName>
            <fullName>Assembly protein E3</fullName>
        </recommendedName>
    </component>
    <component>
        <recommendedName>
            <fullName>Spike glycoprotein E2</fullName>
        </recommendedName>
        <alternativeName>
            <fullName>E2 envelope glycoprotein</fullName>
        </alternativeName>
    </component>
    <component>
        <recommendedName>
            <fullName>6K protein</fullName>
        </recommendedName>
    </component>
    <component>
        <recommendedName>
            <fullName>Spike glycoprotein E1</fullName>
        </recommendedName>
        <alternativeName>
            <fullName>E1 envelope glycoprotein</fullName>
        </alternativeName>
    </component>
</protein>
<reference key="1">
    <citation type="journal article" date="1990" name="Virology">
        <title>Complete sequence of the genomic RNA of O'nyong-nyong virus and its use in the construction of alphavirus phylogenetic trees.</title>
        <authorList>
            <person name="Levinson R.S."/>
            <person name="Strauss J.H."/>
            <person name="Strauss E.G."/>
        </authorList>
    </citation>
    <scope>NUCLEOTIDE SEQUENCE [GENOMIC RNA]</scope>
</reference>
<reference evidence="17" key="2">
    <citation type="journal article" date="2024" name="Int. J. Biol. Macromol.">
        <title>Autoinhibition of suicidal capsid protease from O'nyong'nyong virus.</title>
        <authorList>
            <person name="Chykunova Y."/>
            <person name="Plewka J."/>
            <person name="Wilk P."/>
            <person name="Torzyk K."/>
            <person name="Sienczyk M."/>
            <person name="Dubin G."/>
            <person name="Pyrc K."/>
        </authorList>
    </citation>
    <scope>X-RAY CRYSTALLOGRAPHY (1.90 ANGSTROMS) OF 106-256</scope>
    <scope>ACTIVE SITE (CAPSID PROTEIN)</scope>
</reference>
<sequence>MEFIPAQTYYNRRYQPRPWTQRPTIQVIRPKPRRRRPAGQLAQLISAVSRLALRTVPQKPRRTRKIKKQKQVKQEQQSTTNQKKKAPKQKQTQKKKRPGRRERMCMKIENDCIFEVRHEGKVTGYACLVGDKVMKPAHVKGTIDNADLAKLAFKRSSKYDLECAQIPVHMKSDASKFTHEKPEGYYNWHHGAVQYSGGRFTIPTGAGKPGDSGRPIFDNKGRVVAIVLGGANEGTRTALSVVTWNKDIVTKITPEGSVEWSLALPVMCLLANTTFPCSQPPCAPCCYEKKPEETLRMLEDNVMQPGYYQLLDSALACSQRRQKRNARENFNVYKVTRPYLAHCPDCGEGHSCHSPIALERIRSEATDGTLKIQVSLQIGIKTDDSHDWTKLRYMDSHTPVDADRSGLFVRTSAPCTITGTMGHFILARCPKGETLTVGFVDSRRISHTCMHPFRHEPPLIGREKFHSRPQHGKELPCSTYVHTTAATAEEIEVHMPPDTPDYTLMTQQAGNVKITVDGQTVRYKCKCDGSNEGLITADKVINNCKVDQCHTAVTNHKKWQYNSPLTPRNSEQGDRKGKIHIPFPLVNTTCRVPKARNPTVTYGKNRVTLLLHPDHPTLLSYRAMGRIPDYHEEWITNKKEISITVPAEGLEVTWGNNDPYKYWPQLSTNGTAHGHPHEIILYYYELYPTTTIAVLAAASIVITSLVGLSLGMCICARRRCITPYELTPGATIPFLLGVLCCARTAKAASYYEAATYLWNEQQPLFWLQLLIPLSAAIVVCNCLKLLPCCCKTLTFLAVMSIGARTVTAYEHATVIPNTVGVPCKTLVSRPGYSPMVLEMELQSVTLEPALSLDYITCEYKTITPSPYVKCCGTAECKAKNLPDYNCKVFTGVYPFMWGGAYCFCDAENTQLSEAHVEKSESCKTEFASAYRAHTASVSAKLRVFYQGNNITVSAYANGDHAVTVEDAKFVIGPLSSAWSPFDNKIVVYKGEVYNMDYPPFGAGRPGQFGDIQSRTPDSKDVYANTQLILQRPAAGAIHVPYSQAPSGFKYWLKEKGASLQHTAPFGCQIATNPVRAVNCAVGNIPVSIDIPDAAFTRVTDAPSITDMSCEVASCTHSSDFGGAAVIKYTASKKGKCAVHSVTNAVTIREPNVDVKGTAQLQIAFSTALASAEFKVQICSTLVHCSATCHPPKDHIVNYPSPHTTLGVQDISTTAMSWVQKITGGVGLVVAIAALILIIVLCVSFSRH</sequence>
<proteinExistence type="evidence at protein level"/>
<dbReference type="EC" id="3.4.21.90" evidence="2"/>
<dbReference type="EMBL" id="M20303">
    <property type="protein sequence ID" value="AAA46785.1"/>
    <property type="molecule type" value="Genomic_RNA"/>
</dbReference>
<dbReference type="PIR" id="B34680">
    <property type="entry name" value="VHWVN2"/>
</dbReference>
<dbReference type="PDB" id="8P61">
    <property type="method" value="X-ray"/>
    <property type="resolution" value="1.90 A"/>
    <property type="chains" value="A/B/C/D=106-256"/>
</dbReference>
<dbReference type="PDBsum" id="8P61"/>
<dbReference type="BMRB" id="P22056"/>
<dbReference type="SMR" id="P22056"/>
<dbReference type="MEROPS" id="S03.001"/>
<dbReference type="KEGG" id="vg:1502147"/>
<dbReference type="Proteomes" id="UP000008868">
    <property type="component" value="Segment"/>
</dbReference>
<dbReference type="GO" id="GO:0030430">
    <property type="term" value="C:host cell cytoplasm"/>
    <property type="evidence" value="ECO:0007669"/>
    <property type="project" value="UniProtKB-SubCell"/>
</dbReference>
<dbReference type="GO" id="GO:0042025">
    <property type="term" value="C:host cell nucleus"/>
    <property type="evidence" value="ECO:0007669"/>
    <property type="project" value="UniProtKB-SubCell"/>
</dbReference>
<dbReference type="GO" id="GO:0020002">
    <property type="term" value="C:host cell plasma membrane"/>
    <property type="evidence" value="ECO:0007669"/>
    <property type="project" value="UniProtKB-SubCell"/>
</dbReference>
<dbReference type="GO" id="GO:0016020">
    <property type="term" value="C:membrane"/>
    <property type="evidence" value="ECO:0007669"/>
    <property type="project" value="UniProtKB-KW"/>
</dbReference>
<dbReference type="GO" id="GO:0039619">
    <property type="term" value="C:T=4 icosahedral viral capsid"/>
    <property type="evidence" value="ECO:0007669"/>
    <property type="project" value="UniProtKB-KW"/>
</dbReference>
<dbReference type="GO" id="GO:0055036">
    <property type="term" value="C:virion membrane"/>
    <property type="evidence" value="ECO:0007669"/>
    <property type="project" value="UniProtKB-SubCell"/>
</dbReference>
<dbReference type="GO" id="GO:0003723">
    <property type="term" value="F:RNA binding"/>
    <property type="evidence" value="ECO:0007669"/>
    <property type="project" value="UniProtKB-KW"/>
</dbReference>
<dbReference type="GO" id="GO:0004252">
    <property type="term" value="F:serine-type endopeptidase activity"/>
    <property type="evidence" value="ECO:0007669"/>
    <property type="project" value="InterPro"/>
</dbReference>
<dbReference type="GO" id="GO:0005198">
    <property type="term" value="F:structural molecule activity"/>
    <property type="evidence" value="ECO:0007669"/>
    <property type="project" value="InterPro"/>
</dbReference>
<dbReference type="GO" id="GO:0039654">
    <property type="term" value="P:fusion of virus membrane with host endosome membrane"/>
    <property type="evidence" value="ECO:0007669"/>
    <property type="project" value="UniProtKB-KW"/>
</dbReference>
<dbReference type="GO" id="GO:0006508">
    <property type="term" value="P:proteolysis"/>
    <property type="evidence" value="ECO:0007669"/>
    <property type="project" value="UniProtKB-KW"/>
</dbReference>
<dbReference type="GO" id="GO:0046718">
    <property type="term" value="P:symbiont entry into host cell"/>
    <property type="evidence" value="ECO:0007669"/>
    <property type="project" value="UniProtKB-KW"/>
</dbReference>
<dbReference type="GO" id="GO:0039722">
    <property type="term" value="P:symbiont-mediated suppression of host toll-like receptor signaling pathway"/>
    <property type="evidence" value="ECO:0000250"/>
    <property type="project" value="UniProtKB"/>
</dbReference>
<dbReference type="GO" id="GO:0019062">
    <property type="term" value="P:virion attachment to host cell"/>
    <property type="evidence" value="ECO:0007669"/>
    <property type="project" value="UniProtKB-KW"/>
</dbReference>
<dbReference type="FunFam" id="1.10.287.2230:FF:000001">
    <property type="entry name" value="Structural polyprotein"/>
    <property type="match status" value="1"/>
</dbReference>
<dbReference type="FunFam" id="2.40.10.10:FF:000076">
    <property type="entry name" value="Structural polyprotein"/>
    <property type="match status" value="1"/>
</dbReference>
<dbReference type="FunFam" id="2.60.98.10:FF:000002">
    <property type="entry name" value="Structural polyprotein"/>
    <property type="match status" value="1"/>
</dbReference>
<dbReference type="FunFam" id="2.60.98.10:FF:000004">
    <property type="entry name" value="Structural polyprotein"/>
    <property type="match status" value="1"/>
</dbReference>
<dbReference type="Gene3D" id="1.10.287.2230">
    <property type="match status" value="1"/>
</dbReference>
<dbReference type="Gene3D" id="2.60.40.350">
    <property type="match status" value="1"/>
</dbReference>
<dbReference type="Gene3D" id="2.60.40.3200">
    <property type="entry name" value="Alphavirus E2 glycoprotein, A domain"/>
    <property type="match status" value="1"/>
</dbReference>
<dbReference type="Gene3D" id="2.60.40.4310">
    <property type="entry name" value="Alphavirus E2 glycoprotein, domain B"/>
    <property type="match status" value="1"/>
</dbReference>
<dbReference type="Gene3D" id="2.60.40.2400">
    <property type="entry name" value="Alphavirus E2 glycoprotein, domain C"/>
    <property type="match status" value="1"/>
</dbReference>
<dbReference type="Gene3D" id="2.60.98.10">
    <property type="entry name" value="Tick-borne Encephalitis virus Glycoprotein, domain 1"/>
    <property type="match status" value="3"/>
</dbReference>
<dbReference type="Gene3D" id="2.40.10.10">
    <property type="entry name" value="Trypsin-like serine proteases"/>
    <property type="match status" value="2"/>
</dbReference>
<dbReference type="InterPro" id="IPR002548">
    <property type="entry name" value="Alpha_E1_glycop"/>
</dbReference>
<dbReference type="InterPro" id="IPR000936">
    <property type="entry name" value="Alpha_E2_glycop"/>
</dbReference>
<dbReference type="InterPro" id="IPR002533">
    <property type="entry name" value="Alpha_E3_glycop"/>
</dbReference>
<dbReference type="InterPro" id="IPR042304">
    <property type="entry name" value="Alphavir_E2_A"/>
</dbReference>
<dbReference type="InterPro" id="IPR042305">
    <property type="entry name" value="Alphavir_E2_B"/>
</dbReference>
<dbReference type="InterPro" id="IPR042306">
    <property type="entry name" value="Alphavir_E2_C"/>
</dbReference>
<dbReference type="InterPro" id="IPR000336">
    <property type="entry name" value="Flavivir/Alphavir_Ig-like_sf"/>
</dbReference>
<dbReference type="InterPro" id="IPR036253">
    <property type="entry name" value="Glycoprot_cen/dimer_sf"/>
</dbReference>
<dbReference type="InterPro" id="IPR038055">
    <property type="entry name" value="Glycoprot_E_dimer_dom"/>
</dbReference>
<dbReference type="InterPro" id="IPR014756">
    <property type="entry name" value="Ig_E-set"/>
</dbReference>
<dbReference type="InterPro" id="IPR009003">
    <property type="entry name" value="Peptidase_S1_PA"/>
</dbReference>
<dbReference type="InterPro" id="IPR043504">
    <property type="entry name" value="Peptidase_S1_PA_chymotrypsin"/>
</dbReference>
<dbReference type="InterPro" id="IPR000930">
    <property type="entry name" value="Peptidase_S3"/>
</dbReference>
<dbReference type="Pfam" id="PF01589">
    <property type="entry name" value="Alpha_E1_glycop"/>
    <property type="match status" value="1"/>
</dbReference>
<dbReference type="Pfam" id="PF00943">
    <property type="entry name" value="Alpha_E2_glycop"/>
    <property type="match status" value="1"/>
</dbReference>
<dbReference type="Pfam" id="PF01563">
    <property type="entry name" value="Alpha_E3_glycop"/>
    <property type="match status" value="1"/>
</dbReference>
<dbReference type="Pfam" id="PF00944">
    <property type="entry name" value="Peptidase_S3"/>
    <property type="match status" value="1"/>
</dbReference>
<dbReference type="PRINTS" id="PR00798">
    <property type="entry name" value="TOGAVIRIN"/>
</dbReference>
<dbReference type="SUPFAM" id="SSF81296">
    <property type="entry name" value="E set domains"/>
    <property type="match status" value="1"/>
</dbReference>
<dbReference type="SUPFAM" id="SSF50494">
    <property type="entry name" value="Trypsin-like serine proteases"/>
    <property type="match status" value="1"/>
</dbReference>
<dbReference type="SUPFAM" id="SSF56983">
    <property type="entry name" value="Viral glycoprotein, central and dimerisation domains"/>
    <property type="match status" value="1"/>
</dbReference>
<dbReference type="PROSITE" id="PS51690">
    <property type="entry name" value="ALPHAVIRUS_CP"/>
    <property type="match status" value="1"/>
</dbReference>
<name>POLS_ONNVG</name>
<comment type="function">
    <molecule>Capsid protein</molecule>
    <text evidence="2 3 6">Forms an icosahedral capsid with a T=4 symmetry composed of 240 copies of the capsid protein surrounded by a lipid membrane through which penetrate 80 spikes composed of trimers of E1-E2 heterodimers (By similarity). The capsid protein binds to the viral RNA genome at a site adjacent to a ribosome binding site for viral genome translation following genome release (By similarity). Possesses a protease activity that results in its autocatalytic cleavage from the nascent structural protein (By similarity). Following its self-cleavage, the capsid protein transiently associates with ribosomes, and within several minutes the protein binds to viral RNA and rapidly assembles into icosahedric core particles (By similarity). The resulting nucleocapsid eventually associates with the cytoplasmic domain of the spike glycoprotein E2 at the cell membrane, leading to budding and formation of mature virions (By similarity). In case of infection, new virions attach to target cells and after clathrin-mediated endocytosis their membrane fuses with the host endosomal membrane (By similarity). This leads to the release of the nucleocapsid into the cytoplasm, followed by an uncoating event necessary for the genomic RNA to become accessible (By similarity). The uncoating might be triggered by the interaction of capsid proteins with ribosomes (By similarity). Binding of ribosomes would release the genomic RNA since the same region is genomic RNA-binding and ribosome-binding (By similarity). Specifically inhibits interleukin-1 receptor-associated kinase 1/IRAK1-dependent signaling during viral entry, representing a means by which the alphaviruses may evade innate immune detection and activation prior to viral gene expression (By similarity).</text>
</comment>
<comment type="function">
    <molecule>Assembly protein E3</molecule>
    <text evidence="2">Provides the signal sequence for the translocation of the precursor of protein E3/E2 to the host endoplasmic reticulum. Furin-cleaved E3 remains associated with spike glycoprotein E1 and mediates pH protection of the latter during the transport via the secretory pathway. After virion release from the host cell, the assembly protein E3 is gradually released in the extracellular space.</text>
</comment>
<comment type="function">
    <molecule>Spike glycoprotein E2</molecule>
    <text evidence="2 7">Plays a role in viral attachment to target host cell, by binding to the cell receptor MXRA8 (By similarity). Synthesized as a p62 precursor which is processed by furin at the cell membrane just before virion budding, giving rise to E2-E1 heterodimer. The p62-E1 heterodimer is stable, whereas E2-E1 is unstable and dissociate at low pH. p62 is processed at the last step, presumably to avoid E1 fusion activation before its final export to cell surface. E2 C-terminus contains a transitory transmembrane that would be disrupted by palmitoylation, resulting in reorientation of the C-terminal tail from lumenal to cytoplasmic side. This step is critical since E2 C-terminus is involved in budding by interacting with capsid proteins. This release of E2 C-terminus in cytoplasm occurs lately in protein export, and precludes premature assembly of particles at the endoplasmic reticulum membrane (By similarity).</text>
</comment>
<comment type="function">
    <molecule>6K protein</molecule>
    <text evidence="2 3">Acts as a viroporin that participates in virus glycoprotein processing and transport to the plasma membrane, cell permeabilization and budding of viral particles (By similarity). Disrupts the calcium homeostasis of the cell, probably at the endoplasmic reticulum level (By similarity). This leads to cytoplasmic calcium elevation (By similarity). Because of its lipophilic properties, the 6K protein is postulated to influence the selection of lipids that interact with the transmembrane domains of the glycoproteins, which, in turn, affects the deformability of the bilayer required for the extreme curvature that occurs as budding proceeds. Present in low amount in virions, about 3% compared to viral glycoproteins (By similarity).</text>
</comment>
<comment type="function">
    <molecule>Spike glycoprotein E1</molecule>
    <text evidence="2">Class II viral fusion protein. Fusion activity is inactive as long as E1 is bound to E2 in mature virion. After virus attachment to target cell via host MXRA8 and endocytosis, acidification of the endosome induce dissociation of E1/E2 heterodimer and concomitant trimerization of the E1 subunits. This E1 trimer is fusion active, and promotes release of viral nucleocapsid in cytoplasm after endosome and viral membrane fusion. Efficient fusion requires the presence of cholesterol and sphingolipid in the target membrane.</text>
</comment>
<comment type="catalytic activity">
    <reaction evidence="2">
        <text>Autocatalytic release of the core protein from the N-terminus of the togavirus structural polyprotein by hydrolysis of a -Trp-|-Ser- bond.</text>
        <dbReference type="EC" id="3.4.21.90"/>
    </reaction>
</comment>
<comment type="subunit">
    <molecule>Capsid protein</molecule>
    <text evidence="3 10 11">Homodimer (By similarity). Homomultimer (By similarity). Interacts with host karyopherin KPNA4; this interaction allows the nuclear import of the viral capsid protein (By similarity). Interacts with spike glycoprotein E2 (By similarity). Interacts with host IRAK1; the interaction leads to inhibition of IRAK1-dependent signaling (By similarity).</text>
</comment>
<comment type="subunit">
    <molecule>Precursor of protein E3/E2</molecule>
    <text evidence="2 3 5 11">The precursor of protein E3/E2 and E1 form a heterodimer shortly after synthesis (By similarity).</text>
</comment>
<comment type="subunit">
    <molecule>Spike glycoprotein E1</molecule>
    <text evidence="3 11">The precursor of protein E3/E2 and E1 form a heterodimer shortly after synthesis (By similarity). Processing of the precursor of protein E3/E2 into E2 and E3 results in a heterodimer of the spike glycoproteins E2 and E1 (By similarity). Spike at virion surface are constituted of three E2-E1 heterodimers (By similarity). After target cell attachment and endocytosis, E1 change conformation to form homotrimers (By similarity). Interacts with 6K protein (By similarity).</text>
</comment>
<comment type="subunit">
    <molecule>Spike glycoprotein E2</molecule>
    <text evidence="3 7">Interacts with spike glycoprotein E1 (By similarity). Processing of the precursor of protein E3/E2 into E2 and E3 results in a heterodimer of the spike glycoproteins E2 and E1 (By similarity). Spike at virion surface are constituted of a trimer of E2-E1 heterodimers (By similarity). Interacts with 6K protein (By similarity). Interacts with host MXRA8; this interaction mediates virus entry (By similarity).</text>
</comment>
<comment type="subunit">
    <molecule>6K protein</molecule>
    <text evidence="3 8">Oligomer (By similarity). Interacts with spike glycoprotein E1. Interacts with spike glycoprotein E2 (By similarity).</text>
</comment>
<comment type="subcellular location">
    <molecule>Capsid protein</molecule>
    <subcellularLocation>
        <location evidence="3">Virion</location>
    </subcellularLocation>
    <subcellularLocation>
        <location evidence="11">Host cytoplasm</location>
    </subcellularLocation>
    <subcellularLocation>
        <location evidence="3">Host cell membrane</location>
    </subcellularLocation>
    <subcellularLocation>
        <location evidence="11">Host nucleus</location>
    </subcellularLocation>
    <text evidence="11">Shuttles between the cytoplasm and the nucleus.</text>
</comment>
<comment type="subcellular location">
    <molecule>Spike glycoprotein E2</molecule>
    <subcellularLocation>
        <location evidence="11">Virion membrane</location>
        <topology evidence="12">Single-pass type I membrane protein</topology>
    </subcellularLocation>
    <subcellularLocation>
        <location evidence="3">Host cell membrane</location>
        <topology evidence="11">Single-pass type I membrane protein</topology>
    </subcellularLocation>
</comment>
<comment type="subcellular location">
    <molecule>6K protein</molecule>
    <subcellularLocation>
        <location evidence="3">Host cell membrane</location>
        <topology evidence="12">Multi-pass membrane protein</topology>
    </subcellularLocation>
    <subcellularLocation>
        <location evidence="3">Virion membrane</location>
        <topology evidence="12">Multi-pass membrane protein</topology>
    </subcellularLocation>
    <subcellularLocation>
        <location evidence="3">Host Golgi apparatus</location>
    </subcellularLocation>
    <subcellularLocation>
        <location>Host Golgi apparatus</location>
        <location>Host trans-Golgi network</location>
    </subcellularLocation>
    <subcellularLocation>
        <location evidence="3">Host endoplasmic reticulum</location>
    </subcellularLocation>
</comment>
<comment type="subcellular location">
    <molecule>Spike glycoprotein E1</molecule>
    <subcellularLocation>
        <location evidence="11">Virion membrane</location>
        <topology evidence="12">Single-pass type I membrane protein</topology>
    </subcellularLocation>
    <subcellularLocation>
        <location evidence="3 11">Host cell membrane</location>
        <topology evidence="12">Single-pass type I membrane protein</topology>
    </subcellularLocation>
</comment>
<comment type="domain">
    <molecule>Capsid protein</molecule>
    <text evidence="3 4">The very N-terminus also plays a role in the particle assembly process (By similarity). The N-terminus also contains a nuclear localization signal and a supra nuclear export signal (supraNES), which is an unusually strong NES that mediates host CRM1 binding in the absence of RanGTP and thus can bind CRM1, not only in the nucleus, but also in the cytoplasm (By similarity). The C-terminus functions as a protease during translation to cleave itself from the translating structural polyprotein (By similarity).</text>
</comment>
<comment type="domain">
    <text evidence="2">Structural polyprotein: As soon as the capsid protein has been autocleaved, an internal uncleaved signal peptide directs the remaining polyprotein to the endoplasmic reticulum.</text>
</comment>
<comment type="PTM">
    <text evidence="2">Structural polyprotein: Specific enzymatic cleavages in vivo yield mature proteins. Capsid protein is auto-cleaved during polyprotein translation, unmasking a signal peptide at the N-terminus of the precursor of E3/E2 (By similarity). The remaining polyprotein is then targeted to the host endoplasmic reticulum, where host signal peptidase cleaves it into pE2, 6K and E1 proteins. pE2 is further processed to mature E3 and E2 by host furin in trans-Golgi vesicle (By similarity).</text>
</comment>
<comment type="PTM">
    <molecule>Spike glycoprotein E2</molecule>
    <text evidence="2">Palmitoylated via thioester bonds. These palmitoylations may induce disruption of the C-terminus transmembrane. This would result in the reorientation of E2 C-terminus from lumenal to cytoplasmic side.</text>
</comment>
<comment type="PTM">
    <molecule>Spike glycoprotein E1</molecule>
    <text evidence="2">N-glycosylated.</text>
</comment>
<comment type="PTM">
    <molecule>Spike glycoprotein E2</molecule>
    <text evidence="2">N-glycosylated.</text>
</comment>
<comment type="PTM">
    <molecule>Assembly protein E3</molecule>
    <text evidence="2">N-glycosylated.</text>
</comment>
<comment type="PTM">
    <molecule>6K protein</molecule>
    <text evidence="2">Palmitoylated via thioester bonds.</text>
</comment>
<comment type="miscellaneous">
    <text evidence="16">Belongs to the Old World alphaviruses that usually cause fever, maculopapular rash, arthralgia and myalgia.</text>
</comment>
<comment type="miscellaneous">
    <text evidence="10">Structural polyprotein: Translated from a subgenomic RNA synthesized during togavirus replication.</text>
</comment>
<organism>
    <name type="scientific">O'nyong-nyong virus (strain Gulu)</name>
    <name type="common">ONNV</name>
    <dbReference type="NCBI Taxonomy" id="11028"/>
    <lineage>
        <taxon>Viruses</taxon>
        <taxon>Riboviria</taxon>
        <taxon>Orthornavirae</taxon>
        <taxon>Kitrinoviricota</taxon>
        <taxon>Alsuviricetes</taxon>
        <taxon>Martellivirales</taxon>
        <taxon>Togaviridae</taxon>
        <taxon>Alphavirus</taxon>
        <taxon>Onyong-nyong virus</taxon>
    </lineage>
</organism>
<keyword id="KW-0002">3D-structure</keyword>
<keyword id="KW-0167">Capsid protein</keyword>
<keyword id="KW-0165">Cleavage on pair of basic residues</keyword>
<keyword id="KW-1015">Disulfide bond</keyword>
<keyword id="KW-1170">Fusion of virus membrane with host endosomal membrane</keyword>
<keyword id="KW-1168">Fusion of virus membrane with host membrane</keyword>
<keyword id="KW-0325">Glycoprotein</keyword>
<keyword id="KW-1032">Host cell membrane</keyword>
<keyword id="KW-1035">Host cytoplasm</keyword>
<keyword id="KW-1038">Host endoplasmic reticulum</keyword>
<keyword id="KW-1040">Host Golgi apparatus</keyword>
<keyword id="KW-1043">Host membrane</keyword>
<keyword id="KW-1048">Host nucleus</keyword>
<keyword id="KW-0945">Host-virus interaction</keyword>
<keyword id="KW-0378">Hydrolase</keyword>
<keyword id="KW-0407">Ion channel</keyword>
<keyword id="KW-0406">Ion transport</keyword>
<keyword id="KW-0449">Lipoprotein</keyword>
<keyword id="KW-0472">Membrane</keyword>
<keyword id="KW-0564">Palmitate</keyword>
<keyword id="KW-0645">Protease</keyword>
<keyword id="KW-0694">RNA-binding</keyword>
<keyword id="KW-0720">Serine protease</keyword>
<keyword id="KW-1144">T=4 icosahedral capsid protein</keyword>
<keyword id="KW-0812">Transmembrane</keyword>
<keyword id="KW-1133">Transmembrane helix</keyword>
<keyword id="KW-0813">Transport</keyword>
<keyword id="KW-1161">Viral attachment to host cell</keyword>
<keyword id="KW-1234">Viral attachment to host entry receptor</keyword>
<keyword id="KW-1182">Viral ion channel</keyword>
<keyword id="KW-1162">Viral penetration into host cytoplasm</keyword>
<keyword id="KW-0946">Virion</keyword>
<keyword id="KW-1160">Virus entry into host cell</keyword>
<accession>P22056</accession>
<organismHost>
    <name type="scientific">Anopheles</name>
    <dbReference type="NCBI Taxonomy" id="44482"/>
</organismHost>
<organismHost>
    <name type="scientific">Homo sapiens</name>
    <name type="common">Human</name>
    <dbReference type="NCBI Taxonomy" id="9606"/>
</organismHost>
<feature type="chain" id="PRO_0000041281" description="Capsid protein" evidence="1">
    <location>
        <begin position="1"/>
        <end position="260"/>
    </location>
</feature>
<feature type="chain" id="PRO_0000226239" description="Precursor of protein E3/E2" evidence="1">
    <location>
        <begin position="261"/>
        <end position="747"/>
    </location>
</feature>
<feature type="chain" id="PRO_0000041282" description="Assembly protein E3" evidence="1">
    <location>
        <begin position="261"/>
        <end position="324"/>
    </location>
</feature>
<feature type="chain" id="PRO_0000041283" description="Spike glycoprotein E2" evidence="1">
    <location>
        <begin position="325"/>
        <end position="747"/>
    </location>
</feature>
<feature type="chain" id="PRO_0000041284" description="6K protein" evidence="1">
    <location>
        <begin position="748"/>
        <end position="808"/>
    </location>
</feature>
<feature type="chain" id="PRO_0000041285" description="Spike glycoprotein E1" evidence="1">
    <location>
        <begin position="809"/>
        <end position="1247"/>
    </location>
</feature>
<feature type="transmembrane region" description="Helical" evidence="12">
    <location>
        <begin position="692"/>
        <end position="712"/>
    </location>
</feature>
<feature type="transmembrane region" description="Helical" evidence="12">
    <location>
        <begin position="720"/>
        <end position="740"/>
    </location>
</feature>
<feature type="transmembrane region" description="Helical" evidence="12">
    <location>
        <begin position="763"/>
        <end position="783"/>
    </location>
</feature>
<feature type="transmembrane region" description="Helical" evidence="12">
    <location>
        <begin position="1224"/>
        <end position="1244"/>
    </location>
</feature>
<feature type="domain" description="Peptidase S3" evidence="13">
    <location>
        <begin position="112"/>
        <end position="260"/>
    </location>
</feature>
<feature type="region of interest" description="Host transcription inhibition" evidence="4">
    <location>
        <begin position="36"/>
        <end position="67"/>
    </location>
</feature>
<feature type="region of interest" description="Disordered" evidence="14">
    <location>
        <begin position="54"/>
        <end position="103"/>
    </location>
</feature>
<feature type="region of interest" description="Binding to the viral RNA" evidence="6">
    <location>
        <begin position="83"/>
        <end position="113"/>
    </location>
</feature>
<feature type="region of interest" description="Ribosome-binding" evidence="6">
    <location>
        <begin position="98"/>
        <end position="112"/>
    </location>
</feature>
<feature type="region of interest" description="Interaction with spike glycoprotein E2" evidence="3">
    <location>
        <begin position="154"/>
        <end position="159"/>
    </location>
</feature>
<feature type="region of interest" description="Dimerization of the capsid protein" evidence="5">
    <location>
        <begin position="182"/>
        <end position="192"/>
    </location>
</feature>
<feature type="region of interest" description="Dimerization of the capsid protein" evidence="5">
    <location>
        <begin position="218"/>
        <end position="222"/>
    </location>
</feature>
<feature type="region of interest" description="Functions as an uncleaved signal peptide for the precursor of protein E3/E2" evidence="2">
    <location>
        <begin position="261"/>
        <end position="273"/>
    </location>
</feature>
<feature type="region of interest" description="Interaction with the capsid protein" evidence="3">
    <location>
        <begin position="715"/>
        <end position="719"/>
    </location>
</feature>
<feature type="region of interest" description="Transient transmembrane before p62-6K protein processing" evidence="12">
    <location>
        <begin position="720"/>
        <end position="740"/>
    </location>
</feature>
<feature type="region of interest" description="E1 fusion peptide loop" evidence="11">
    <location>
        <begin position="892"/>
        <end position="909"/>
    </location>
</feature>
<feature type="short sequence motif" description="Nuclear localization signal" evidence="4">
    <location>
        <begin position="60"/>
        <end position="98"/>
    </location>
</feature>
<feature type="short sequence motif" description="Nuclear export signal" evidence="4">
    <location>
        <begin position="143"/>
        <end position="153"/>
    </location>
</feature>
<feature type="compositionally biased region" description="Basic residues" evidence="14">
    <location>
        <begin position="59"/>
        <end position="71"/>
    </location>
</feature>
<feature type="compositionally biased region" description="Basic residues" evidence="14">
    <location>
        <begin position="82"/>
        <end position="100"/>
    </location>
</feature>
<feature type="active site" description="Charge relay system" evidence="13 15">
    <location>
        <position position="138"/>
    </location>
</feature>
<feature type="active site" description="Charge relay system" evidence="13 15">
    <location>
        <position position="160"/>
    </location>
</feature>
<feature type="active site" description="Charge relay system" evidence="13 15">
    <location>
        <position position="212"/>
    </location>
</feature>
<feature type="site" description="Involved in dimerization of the capsid protein" evidence="10">
    <location>
        <position position="186"/>
    </location>
</feature>
<feature type="site" description="Involved in dimerization of the capsid protein" evidence="10">
    <location>
        <position position="219"/>
    </location>
</feature>
<feature type="site" description="Cleavage; by autolysis" evidence="2">
    <location>
        <begin position="260"/>
        <end position="261"/>
    </location>
</feature>
<feature type="site" description="Cleavage; by host furin" evidence="2">
    <location>
        <begin position="324"/>
        <end position="325"/>
    </location>
</feature>
<feature type="site" description="Cleavage; by host signal peptidase" evidence="2">
    <location>
        <begin position="747"/>
        <end position="748"/>
    </location>
</feature>
<feature type="site" description="Cleavage; by host signal peptidase" evidence="2">
    <location>
        <begin position="808"/>
        <end position="809"/>
    </location>
</feature>
<feature type="lipid moiety-binding region" description="S-palmitoyl cysteine; by host" evidence="3">
    <location>
        <position position="720"/>
    </location>
</feature>
<feature type="lipid moiety-binding region" description="S-palmitoyl cysteine; by host" evidence="9">
    <location>
        <position position="740"/>
    </location>
</feature>
<feature type="lipid moiety-binding region" description="S-palmitoyl cysteine; by host" evidence="9">
    <location>
        <position position="741"/>
    </location>
</feature>
<feature type="lipid moiety-binding region" description="S-palmitoyl cysteine; by host" evidence="9">
    <location>
        <position position="1241"/>
    </location>
</feature>
<feature type="lipid moiety-binding region" description="S-stearoyl cysteine; by host" evidence="1">
    <location>
        <position position="1241"/>
    </location>
</feature>
<feature type="glycosylation site" description="N-linked (GlcNAc...) asparagine; by host" evidence="12">
    <location>
        <position position="272"/>
    </location>
</feature>
<feature type="glycosylation site" description="N-linked (GlcNAc...) asparagine; by host" evidence="9">
    <location>
        <position position="587"/>
    </location>
</feature>
<feature type="glycosylation site" description="N-linked (GlcNAc...) asparagine; by host" evidence="12">
    <location>
        <position position="669"/>
    </location>
</feature>
<feature type="glycosylation site" description="N-linked (GlcNAc...) asparagine; by host" evidence="9">
    <location>
        <position position="949"/>
    </location>
</feature>
<feature type="glycosylation site" description="N-linked (GlcNAc...) asparagine; by host" evidence="9">
    <location>
        <position position="1078"/>
    </location>
</feature>
<feature type="disulfide bond" evidence="2">
    <location>
        <begin position="112"/>
        <end position="127"/>
    </location>
</feature>
<feature type="disulfide bond" evidence="8">
    <location>
        <begin position="268"/>
        <end position="277"/>
    </location>
</feature>
<feature type="disulfide bond" evidence="8">
    <location>
        <begin position="282"/>
        <end position="286"/>
    </location>
</feature>
<feature type="disulfide bond" evidence="8">
    <location>
        <begin position="285"/>
        <end position="317"/>
    </location>
</feature>
<feature type="disulfide bond" evidence="8">
    <location>
        <begin position="343"/>
        <end position="449"/>
    </location>
</feature>
<feature type="disulfide bond" evidence="8">
    <location>
        <begin position="346"/>
        <end position="352"/>
    </location>
</feature>
<feature type="disulfide bond" evidence="8">
    <location>
        <begin position="415"/>
        <end position="429"/>
    </location>
</feature>
<feature type="disulfide bond" evidence="8">
    <location>
        <begin position="477"/>
        <end position="590"/>
    </location>
</feature>
<feature type="disulfide bond" evidence="8">
    <location>
        <begin position="525"/>
        <end position="549"/>
    </location>
</feature>
<feature type="disulfide bond" evidence="8">
    <location>
        <begin position="527"/>
        <end position="544"/>
    </location>
</feature>
<feature type="disulfide bond" evidence="8">
    <location>
        <begin position="720"/>
        <end position="741"/>
    </location>
</feature>
<feature type="disulfide bond" evidence="8">
    <location>
        <begin position="857"/>
        <end position="922"/>
    </location>
</feature>
<feature type="disulfide bond" evidence="8">
    <location>
        <begin position="870"/>
        <end position="902"/>
    </location>
</feature>
<feature type="disulfide bond" evidence="8">
    <location>
        <begin position="871"/>
        <end position="904"/>
    </location>
</feature>
<feature type="disulfide bond" evidence="8">
    <location>
        <begin position="876"/>
        <end position="886"/>
    </location>
</feature>
<feature type="disulfide bond" evidence="8">
    <location>
        <begin position="1067"/>
        <end position="1079"/>
    </location>
</feature>
<feature type="disulfide bond" evidence="8">
    <location>
        <begin position="1109"/>
        <end position="1184"/>
    </location>
</feature>
<feature type="disulfide bond" evidence="8">
    <location>
        <begin position="1114"/>
        <end position="1188"/>
    </location>
</feature>
<feature type="disulfide bond" evidence="8">
    <location>
        <begin position="1136"/>
        <end position="1178"/>
    </location>
</feature>
<evidence type="ECO:0000250" key="1"/>
<evidence type="ECO:0000250" key="2">
    <source>
        <dbReference type="UniProtKB" id="P03315"/>
    </source>
</evidence>
<evidence type="ECO:0000250" key="3">
    <source>
        <dbReference type="UniProtKB" id="P03316"/>
    </source>
</evidence>
<evidence type="ECO:0000250" key="4">
    <source>
        <dbReference type="UniProtKB" id="P09592"/>
    </source>
</evidence>
<evidence type="ECO:0000250" key="5">
    <source>
        <dbReference type="UniProtKB" id="P0DOK1"/>
    </source>
</evidence>
<evidence type="ECO:0000250" key="6">
    <source>
        <dbReference type="UniProtKB" id="P27284"/>
    </source>
</evidence>
<evidence type="ECO:0000250" key="7">
    <source>
        <dbReference type="UniProtKB" id="Q5WQY5"/>
    </source>
</evidence>
<evidence type="ECO:0000250" key="8">
    <source>
        <dbReference type="UniProtKB" id="Q5XXP3"/>
    </source>
</evidence>
<evidence type="ECO:0000250" key="9">
    <source>
        <dbReference type="UniProtKB" id="Q5Y388"/>
    </source>
</evidence>
<evidence type="ECO:0000250" key="10">
    <source>
        <dbReference type="UniProtKB" id="Q86925"/>
    </source>
</evidence>
<evidence type="ECO:0000250" key="11">
    <source>
        <dbReference type="UniProtKB" id="Q8JUX5"/>
    </source>
</evidence>
<evidence type="ECO:0000255" key="12"/>
<evidence type="ECO:0000255" key="13">
    <source>
        <dbReference type="PROSITE-ProRule" id="PRU01027"/>
    </source>
</evidence>
<evidence type="ECO:0000256" key="14">
    <source>
        <dbReference type="SAM" id="MobiDB-lite"/>
    </source>
</evidence>
<evidence type="ECO:0000269" key="15">
    <source>
    </source>
</evidence>
<evidence type="ECO:0000305" key="16"/>
<evidence type="ECO:0007744" key="17">
    <source>
        <dbReference type="PDB" id="8P61"/>
    </source>
</evidence>